<reference key="1">
    <citation type="submission" date="2006-10" db="EMBL/GenBank/DDBJ databases">
        <authorList>
            <consortium name="Sanger Xenopus tropicalis EST/cDNA project"/>
        </authorList>
    </citation>
    <scope>NUCLEOTIDE SEQUENCE [LARGE SCALE MRNA]</scope>
    <source>
        <tissue>Gastrula</tissue>
    </source>
</reference>
<reference key="2">
    <citation type="submission" date="2008-04" db="EMBL/GenBank/DDBJ databases">
        <authorList>
            <consortium name="NIH - Xenopus Gene Collection (XGC) project"/>
        </authorList>
    </citation>
    <scope>NUCLEOTIDE SEQUENCE [LARGE SCALE MRNA]</scope>
    <source>
        <tissue>Embryo</tissue>
    </source>
</reference>
<keyword id="KW-0221">Differentiation</keyword>
<keyword id="KW-0255">Endonuclease</keyword>
<keyword id="KW-0378">Hydrolase</keyword>
<keyword id="KW-0442">Lipid degradation</keyword>
<keyword id="KW-0443">Lipid metabolism</keyword>
<keyword id="KW-0469">Meiosis</keyword>
<keyword id="KW-0472">Membrane</keyword>
<keyword id="KW-0479">Metal-binding</keyword>
<keyword id="KW-0496">Mitochondrion</keyword>
<keyword id="KW-1000">Mitochondrion outer membrane</keyword>
<keyword id="KW-0540">Nuclease</keyword>
<keyword id="KW-1185">Reference proteome</keyword>
<keyword id="KW-0744">Spermatogenesis</keyword>
<keyword id="KW-0812">Transmembrane</keyword>
<keyword id="KW-1133">Transmembrane helix</keyword>
<proteinExistence type="evidence at transcript level"/>
<feature type="chain" id="PRO_0000325914" description="Mitochondrial cardiolipin hydrolase">
    <location>
        <begin position="1"/>
        <end position="210"/>
    </location>
</feature>
<feature type="topological domain" description="Mitochondrial intermembrane" evidence="3">
    <location>
        <begin position="1"/>
        <end position="6"/>
    </location>
</feature>
<feature type="transmembrane region" description="Helical" evidence="3">
    <location>
        <begin position="7"/>
        <end position="24"/>
    </location>
</feature>
<feature type="topological domain" description="Cytoplasmic" evidence="3">
    <location>
        <begin position="25"/>
        <end position="210"/>
    </location>
</feature>
<feature type="domain" description="PLD phosphodiesterase" evidence="4">
    <location>
        <begin position="138"/>
        <end position="165"/>
    </location>
</feature>
<feature type="active site" evidence="4">
    <location>
        <position position="143"/>
    </location>
</feature>
<feature type="active site" evidence="4">
    <location>
        <position position="145"/>
    </location>
</feature>
<feature type="active site" evidence="4">
    <location>
        <position position="150"/>
    </location>
</feature>
<feature type="sequence conflict" description="In Ref. 1; CAJ83564." evidence="5" ref="1">
    <original>V</original>
    <variation>A</variation>
    <location>
        <position position="10"/>
    </location>
</feature>
<feature type="sequence conflict" description="In Ref. 1; CAJ83564." evidence="5" ref="1">
    <original>S</original>
    <variation>T</variation>
    <location>
        <position position="102"/>
    </location>
</feature>
<name>PLD6_XENTR</name>
<evidence type="ECO:0000250" key="1">
    <source>
        <dbReference type="UniProtKB" id="Q5SWZ9"/>
    </source>
</evidence>
<evidence type="ECO:0000250" key="2">
    <source>
        <dbReference type="UniProtKB" id="Q8N2A8"/>
    </source>
</evidence>
<evidence type="ECO:0000255" key="3"/>
<evidence type="ECO:0000255" key="4">
    <source>
        <dbReference type="PROSITE-ProRule" id="PRU00153"/>
    </source>
</evidence>
<evidence type="ECO:0000305" key="5"/>
<accession>Q28DT3</accession>
<accession>B1WB21</accession>
<dbReference type="EC" id="3.1.-.-" evidence="1"/>
<dbReference type="EC" id="3.1.4.-" evidence="2"/>
<dbReference type="EMBL" id="CR848611">
    <property type="protein sequence ID" value="CAJ83564.1"/>
    <property type="molecule type" value="mRNA"/>
</dbReference>
<dbReference type="EMBL" id="BC161584">
    <property type="protein sequence ID" value="AAI61584.1"/>
    <property type="molecule type" value="mRNA"/>
</dbReference>
<dbReference type="RefSeq" id="NP_001016875.2">
    <property type="nucleotide sequence ID" value="NM_001016875.3"/>
</dbReference>
<dbReference type="SMR" id="Q28DT3"/>
<dbReference type="FunCoup" id="Q28DT3">
    <property type="interactions" value="634"/>
</dbReference>
<dbReference type="STRING" id="8364.ENSXETP00000006634"/>
<dbReference type="PaxDb" id="8364-ENSXETP00000012653"/>
<dbReference type="GeneID" id="549629"/>
<dbReference type="KEGG" id="xtr:549629"/>
<dbReference type="AGR" id="Xenbase:XB-GENE-5729937"/>
<dbReference type="CTD" id="201164"/>
<dbReference type="Xenbase" id="XB-GENE-5729937">
    <property type="gene designation" value="pld6"/>
</dbReference>
<dbReference type="eggNOG" id="ENOG502RXG9">
    <property type="taxonomic scope" value="Eukaryota"/>
</dbReference>
<dbReference type="HOGENOM" id="CLU_080814_0_1_1"/>
<dbReference type="InParanoid" id="Q28DT3"/>
<dbReference type="OMA" id="RIWEEFD"/>
<dbReference type="OrthoDB" id="5205528at2759"/>
<dbReference type="PhylomeDB" id="Q28DT3"/>
<dbReference type="TreeFam" id="TF332817"/>
<dbReference type="Reactome" id="R-XTR-1483166">
    <property type="pathway name" value="Synthesis of PA"/>
</dbReference>
<dbReference type="Proteomes" id="UP000008143">
    <property type="component" value="Chromosome 9"/>
</dbReference>
<dbReference type="GO" id="GO:0005741">
    <property type="term" value="C:mitochondrial outer membrane"/>
    <property type="evidence" value="ECO:0000250"/>
    <property type="project" value="UniProtKB"/>
</dbReference>
<dbReference type="GO" id="GO:0035755">
    <property type="term" value="F:cardiolipin hydrolase activity"/>
    <property type="evidence" value="ECO:0000250"/>
    <property type="project" value="UniProtKB"/>
</dbReference>
<dbReference type="GO" id="GO:0004519">
    <property type="term" value="F:endonuclease activity"/>
    <property type="evidence" value="ECO:0007669"/>
    <property type="project" value="UniProtKB-KW"/>
</dbReference>
<dbReference type="GO" id="GO:0046872">
    <property type="term" value="F:metal ion binding"/>
    <property type="evidence" value="ECO:0007669"/>
    <property type="project" value="UniProtKB-KW"/>
</dbReference>
<dbReference type="GO" id="GO:0042803">
    <property type="term" value="F:protein homodimerization activity"/>
    <property type="evidence" value="ECO:0000250"/>
    <property type="project" value="UniProtKB"/>
</dbReference>
<dbReference type="GO" id="GO:0016042">
    <property type="term" value="P:lipid catabolic process"/>
    <property type="evidence" value="ECO:0007669"/>
    <property type="project" value="UniProtKB-KW"/>
</dbReference>
<dbReference type="GO" id="GO:0051321">
    <property type="term" value="P:meiotic cell cycle"/>
    <property type="evidence" value="ECO:0000250"/>
    <property type="project" value="UniProtKB"/>
</dbReference>
<dbReference type="GO" id="GO:0008053">
    <property type="term" value="P:mitochondrial fusion"/>
    <property type="evidence" value="ECO:0000250"/>
    <property type="project" value="UniProtKB"/>
</dbReference>
<dbReference type="GO" id="GO:0030719">
    <property type="term" value="P:P granule organization"/>
    <property type="evidence" value="ECO:0000250"/>
    <property type="project" value="UniProtKB"/>
</dbReference>
<dbReference type="GO" id="GO:0007286">
    <property type="term" value="P:spermatid development"/>
    <property type="evidence" value="ECO:0000250"/>
    <property type="project" value="UniProtKB"/>
</dbReference>
<dbReference type="CDD" id="cd09171">
    <property type="entry name" value="PLDc_vPLD6_like"/>
    <property type="match status" value="1"/>
</dbReference>
<dbReference type="FunFam" id="3.30.870.10:FF:000030">
    <property type="entry name" value="mitochondrial cardiolipin hydrolase"/>
    <property type="match status" value="1"/>
</dbReference>
<dbReference type="Gene3D" id="3.30.870.10">
    <property type="entry name" value="Endonuclease Chain A"/>
    <property type="match status" value="1"/>
</dbReference>
<dbReference type="InterPro" id="IPR025202">
    <property type="entry name" value="PLD-like_dom"/>
</dbReference>
<dbReference type="InterPro" id="IPR051406">
    <property type="entry name" value="PLD_domain"/>
</dbReference>
<dbReference type="InterPro" id="IPR001736">
    <property type="entry name" value="PLipase_D/transphosphatidylase"/>
</dbReference>
<dbReference type="PANTHER" id="PTHR43856">
    <property type="entry name" value="CARDIOLIPIN HYDROLASE"/>
    <property type="match status" value="1"/>
</dbReference>
<dbReference type="PANTHER" id="PTHR43856:SF1">
    <property type="entry name" value="MITOCHONDRIAL CARDIOLIPIN HYDROLASE"/>
    <property type="match status" value="1"/>
</dbReference>
<dbReference type="Pfam" id="PF13091">
    <property type="entry name" value="PLDc_2"/>
    <property type="match status" value="1"/>
</dbReference>
<dbReference type="SMART" id="SM00155">
    <property type="entry name" value="PLDc"/>
    <property type="match status" value="1"/>
</dbReference>
<dbReference type="SUPFAM" id="SSF56024">
    <property type="entry name" value="Phospholipase D/nuclease"/>
    <property type="match status" value="1"/>
</dbReference>
<dbReference type="PROSITE" id="PS50035">
    <property type="entry name" value="PLD"/>
    <property type="match status" value="1"/>
</dbReference>
<sequence>MLLWGRWKVVAGLAGLALSLELLLRYMRRRKPIREVLFFPAPVTCIEPVLYPMKQCSCPLPHTDSAFSRLLLLLLRAQRSLELCVFTFSCPSLARAVLLLHSRGVRVRVITDNDYMAASGSQIGPLRSAGVAVRHDQSSGYMHHKFAVVDGTVVLTGSLNWTVQATQTNRENILITDDRVIVKAYQQEFERLWQEYDPASYDFFPEKENK</sequence>
<gene>
    <name type="primary">pld6</name>
    <name type="ORF">TGas067k05.1</name>
</gene>
<organism>
    <name type="scientific">Xenopus tropicalis</name>
    <name type="common">Western clawed frog</name>
    <name type="synonym">Silurana tropicalis</name>
    <dbReference type="NCBI Taxonomy" id="8364"/>
    <lineage>
        <taxon>Eukaryota</taxon>
        <taxon>Metazoa</taxon>
        <taxon>Chordata</taxon>
        <taxon>Craniata</taxon>
        <taxon>Vertebrata</taxon>
        <taxon>Euteleostomi</taxon>
        <taxon>Amphibia</taxon>
        <taxon>Batrachia</taxon>
        <taxon>Anura</taxon>
        <taxon>Pipoidea</taxon>
        <taxon>Pipidae</taxon>
        <taxon>Xenopodinae</taxon>
        <taxon>Xenopus</taxon>
        <taxon>Silurana</taxon>
    </lineage>
</organism>
<comment type="function">
    <text evidence="1 2">Presents phospholipase and nuclease activities, depending on the different physiological conditions. Plays a key role in mitochondrial fusion and fission via its phospholipase activity. In its phospholipase role, it uses the mitochondrial lipid cardiolipin as substrate to generate phosphatidate (PA or 1,2-diacyl-sn-glycero-3-phosphate), a second messenger signaling lipid. Production of PA facilitates Mitofusin-mediated fusion, whereas the cleavage of PA by the Lipin family of phosphatases produces diacylgycerol (DAG) which promotes mitochondrial fission. Regulates mitochondrial shape through facilitating mitochondrial fusion. During spermatogenesis, plays a critical role in PIWI-interacting RNA (piRNA) biogenesis (By similarity). piRNAs provide essential protection against the activity of mobile genetic elements. piRNA-mediated transposon silencing is thus critical for maintaining genome stability, in particular in germline cells when transposons are mobilized as a consequence of wide-spread genomic demethylation. Has been shown to be a backbone-non-specific, single strand-specific nuclease, cleaving either RNA or DNA substrates with similar affinity (By similarity). Produces 5' phosphate and 3' hydroxyl termini, suggesting it could directly participate in the processing of primary piRNA transcripts (By similarity). Has been proposed to act as a cardiolipin hydrolase to generate phosphatidic acid at mitochondrial surface. Although it cannot be excluded that it can act as a phospholipase in some circumstances, this activity could not be confirmed (By similarity).</text>
</comment>
<comment type="catalytic activity">
    <reaction evidence="2">
        <text>a cardiolipin + H2O = a 1,2-diacyl-sn-glycero-3-phospho-(1'-sn-glycerol) + a 1,2-diacyl-sn-glycero-3-phosphate + H(+)</text>
        <dbReference type="Rhea" id="RHEA:44884"/>
        <dbReference type="ChEBI" id="CHEBI:15377"/>
        <dbReference type="ChEBI" id="CHEBI:15378"/>
        <dbReference type="ChEBI" id="CHEBI:58608"/>
        <dbReference type="ChEBI" id="CHEBI:62237"/>
        <dbReference type="ChEBI" id="CHEBI:64716"/>
    </reaction>
    <physiologicalReaction direction="left-to-right" evidence="2">
        <dbReference type="Rhea" id="RHEA:44885"/>
    </physiologicalReaction>
</comment>
<comment type="subunit">
    <text evidence="1">Homodimer.</text>
</comment>
<comment type="subcellular location">
    <subcellularLocation>
        <location evidence="1">Mitochondrion outer membrane</location>
        <topology evidence="1">Single-pass membrane protein</topology>
    </subcellularLocation>
</comment>
<comment type="domain">
    <text evidence="2">In contrast to other members of the phospholipase D family, contains only one PLD phosphodiesterase domain, suggesting that it has a single half-catalytic and requires homodimerization to form a complete active site.</text>
</comment>
<comment type="similarity">
    <text evidence="5">Belongs to the phospholipase D family. MitoPLD/Zucchini subfamily.</text>
</comment>
<protein>
    <recommendedName>
        <fullName>Mitochondrial cardiolipin hydrolase</fullName>
        <ecNumber evidence="1">3.1.-.-</ecNumber>
    </recommendedName>
    <alternativeName>
        <fullName>Choline phosphatase 6</fullName>
    </alternativeName>
    <alternativeName>
        <fullName evidence="2">Mitochondrial phospholipase</fullName>
        <shortName evidence="2">MitoPLD</shortName>
        <ecNumber evidence="2">3.1.4.-</ecNumber>
    </alternativeName>
    <alternativeName>
        <fullName>Phosphatidylcholine-hydrolyzing phospholipase D6</fullName>
    </alternativeName>
    <alternativeName>
        <fullName>Phospholipase D6</fullName>
        <shortName>PLD 6</shortName>
    </alternativeName>
</protein>